<keyword id="KW-0007">Acetylation</keyword>
<keyword id="KW-0963">Cytoplasm</keyword>
<keyword id="KW-0251">Elongation factor</keyword>
<keyword id="KW-0342">GTP-binding</keyword>
<keyword id="KW-0547">Nucleotide-binding</keyword>
<keyword id="KW-0648">Protein biosynthesis</keyword>
<keyword id="KW-1185">Reference proteome</keyword>
<dbReference type="EMBL" id="AE014075">
    <property type="protein sequence ID" value="AAN82550.1"/>
    <property type="molecule type" value="Genomic_DNA"/>
</dbReference>
<dbReference type="RefSeq" id="WP_000124700.1">
    <property type="nucleotide sequence ID" value="NZ_CP051263.1"/>
</dbReference>
<dbReference type="SMR" id="P0A6M9"/>
<dbReference type="STRING" id="199310.c4112"/>
<dbReference type="GeneID" id="93778658"/>
<dbReference type="KEGG" id="ecc:c4112"/>
<dbReference type="eggNOG" id="COG0480">
    <property type="taxonomic scope" value="Bacteria"/>
</dbReference>
<dbReference type="HOGENOM" id="CLU_002794_4_1_6"/>
<dbReference type="BioCyc" id="ECOL199310:C4112-MONOMER"/>
<dbReference type="Proteomes" id="UP000001410">
    <property type="component" value="Chromosome"/>
</dbReference>
<dbReference type="GO" id="GO:0005737">
    <property type="term" value="C:cytoplasm"/>
    <property type="evidence" value="ECO:0007669"/>
    <property type="project" value="UniProtKB-SubCell"/>
</dbReference>
<dbReference type="GO" id="GO:0005525">
    <property type="term" value="F:GTP binding"/>
    <property type="evidence" value="ECO:0007669"/>
    <property type="project" value="UniProtKB-UniRule"/>
</dbReference>
<dbReference type="GO" id="GO:0003924">
    <property type="term" value="F:GTPase activity"/>
    <property type="evidence" value="ECO:0007669"/>
    <property type="project" value="InterPro"/>
</dbReference>
<dbReference type="GO" id="GO:0097216">
    <property type="term" value="F:guanosine tetraphosphate binding"/>
    <property type="evidence" value="ECO:0007669"/>
    <property type="project" value="UniProtKB-ARBA"/>
</dbReference>
<dbReference type="GO" id="GO:0003746">
    <property type="term" value="F:translation elongation factor activity"/>
    <property type="evidence" value="ECO:0007669"/>
    <property type="project" value="UniProtKB-UniRule"/>
</dbReference>
<dbReference type="GO" id="GO:0032790">
    <property type="term" value="P:ribosome disassembly"/>
    <property type="evidence" value="ECO:0007669"/>
    <property type="project" value="TreeGrafter"/>
</dbReference>
<dbReference type="CDD" id="cd01886">
    <property type="entry name" value="EF-G"/>
    <property type="match status" value="1"/>
</dbReference>
<dbReference type="CDD" id="cd16262">
    <property type="entry name" value="EFG_III"/>
    <property type="match status" value="1"/>
</dbReference>
<dbReference type="CDD" id="cd01434">
    <property type="entry name" value="EFG_mtEFG1_IV"/>
    <property type="match status" value="1"/>
</dbReference>
<dbReference type="CDD" id="cd03713">
    <property type="entry name" value="EFG_mtEFG_C"/>
    <property type="match status" value="1"/>
</dbReference>
<dbReference type="CDD" id="cd04088">
    <property type="entry name" value="EFG_mtEFG_II"/>
    <property type="match status" value="1"/>
</dbReference>
<dbReference type="FunFam" id="2.40.30.10:FF:000006">
    <property type="entry name" value="Elongation factor G"/>
    <property type="match status" value="1"/>
</dbReference>
<dbReference type="FunFam" id="3.30.230.10:FF:000003">
    <property type="entry name" value="Elongation factor G"/>
    <property type="match status" value="1"/>
</dbReference>
<dbReference type="FunFam" id="3.30.70.240:FF:000001">
    <property type="entry name" value="Elongation factor G"/>
    <property type="match status" value="1"/>
</dbReference>
<dbReference type="FunFam" id="3.30.70.870:FF:000001">
    <property type="entry name" value="Elongation factor G"/>
    <property type="match status" value="1"/>
</dbReference>
<dbReference type="FunFam" id="3.40.50.300:FF:000029">
    <property type="entry name" value="Elongation factor G"/>
    <property type="match status" value="1"/>
</dbReference>
<dbReference type="Gene3D" id="3.30.230.10">
    <property type="match status" value="1"/>
</dbReference>
<dbReference type="Gene3D" id="3.30.70.240">
    <property type="match status" value="1"/>
</dbReference>
<dbReference type="Gene3D" id="3.30.70.870">
    <property type="entry name" value="Elongation Factor G (Translational Gtpase), domain 3"/>
    <property type="match status" value="1"/>
</dbReference>
<dbReference type="Gene3D" id="3.40.50.300">
    <property type="entry name" value="P-loop containing nucleotide triphosphate hydrolases"/>
    <property type="match status" value="1"/>
</dbReference>
<dbReference type="Gene3D" id="2.40.30.10">
    <property type="entry name" value="Translation factors"/>
    <property type="match status" value="1"/>
</dbReference>
<dbReference type="HAMAP" id="MF_00054_B">
    <property type="entry name" value="EF_G_EF_2_B"/>
    <property type="match status" value="1"/>
</dbReference>
<dbReference type="InterPro" id="IPR041095">
    <property type="entry name" value="EFG_II"/>
</dbReference>
<dbReference type="InterPro" id="IPR009022">
    <property type="entry name" value="EFG_III"/>
</dbReference>
<dbReference type="InterPro" id="IPR035647">
    <property type="entry name" value="EFG_III/V"/>
</dbReference>
<dbReference type="InterPro" id="IPR047872">
    <property type="entry name" value="EFG_IV"/>
</dbReference>
<dbReference type="InterPro" id="IPR035649">
    <property type="entry name" value="EFG_V"/>
</dbReference>
<dbReference type="InterPro" id="IPR000640">
    <property type="entry name" value="EFG_V-like"/>
</dbReference>
<dbReference type="InterPro" id="IPR004161">
    <property type="entry name" value="EFTu-like_2"/>
</dbReference>
<dbReference type="InterPro" id="IPR031157">
    <property type="entry name" value="G_TR_CS"/>
</dbReference>
<dbReference type="InterPro" id="IPR027417">
    <property type="entry name" value="P-loop_NTPase"/>
</dbReference>
<dbReference type="InterPro" id="IPR020568">
    <property type="entry name" value="Ribosomal_Su5_D2-typ_SF"/>
</dbReference>
<dbReference type="InterPro" id="IPR014721">
    <property type="entry name" value="Ribsml_uS5_D2-typ_fold_subgr"/>
</dbReference>
<dbReference type="InterPro" id="IPR005225">
    <property type="entry name" value="Small_GTP-bd"/>
</dbReference>
<dbReference type="InterPro" id="IPR000795">
    <property type="entry name" value="T_Tr_GTP-bd_dom"/>
</dbReference>
<dbReference type="InterPro" id="IPR009000">
    <property type="entry name" value="Transl_B-barrel_sf"/>
</dbReference>
<dbReference type="InterPro" id="IPR004540">
    <property type="entry name" value="Transl_elong_EFG/EF2"/>
</dbReference>
<dbReference type="InterPro" id="IPR005517">
    <property type="entry name" value="Transl_elong_EFG/EF2_IV"/>
</dbReference>
<dbReference type="NCBIfam" id="TIGR00484">
    <property type="entry name" value="EF-G"/>
    <property type="match status" value="1"/>
</dbReference>
<dbReference type="NCBIfam" id="NF009381">
    <property type="entry name" value="PRK12740.1-5"/>
    <property type="match status" value="1"/>
</dbReference>
<dbReference type="NCBIfam" id="TIGR00231">
    <property type="entry name" value="small_GTP"/>
    <property type="match status" value="1"/>
</dbReference>
<dbReference type="PANTHER" id="PTHR43261:SF1">
    <property type="entry name" value="RIBOSOME-RELEASING FACTOR 2, MITOCHONDRIAL"/>
    <property type="match status" value="1"/>
</dbReference>
<dbReference type="PANTHER" id="PTHR43261">
    <property type="entry name" value="TRANSLATION ELONGATION FACTOR G-RELATED"/>
    <property type="match status" value="1"/>
</dbReference>
<dbReference type="Pfam" id="PF00679">
    <property type="entry name" value="EFG_C"/>
    <property type="match status" value="1"/>
</dbReference>
<dbReference type="Pfam" id="PF14492">
    <property type="entry name" value="EFG_III"/>
    <property type="match status" value="1"/>
</dbReference>
<dbReference type="Pfam" id="PF03764">
    <property type="entry name" value="EFG_IV"/>
    <property type="match status" value="1"/>
</dbReference>
<dbReference type="Pfam" id="PF00009">
    <property type="entry name" value="GTP_EFTU"/>
    <property type="match status" value="1"/>
</dbReference>
<dbReference type="Pfam" id="PF03144">
    <property type="entry name" value="GTP_EFTU_D2"/>
    <property type="match status" value="1"/>
</dbReference>
<dbReference type="PRINTS" id="PR00315">
    <property type="entry name" value="ELONGATNFCT"/>
</dbReference>
<dbReference type="SMART" id="SM00838">
    <property type="entry name" value="EFG_C"/>
    <property type="match status" value="1"/>
</dbReference>
<dbReference type="SMART" id="SM00889">
    <property type="entry name" value="EFG_IV"/>
    <property type="match status" value="1"/>
</dbReference>
<dbReference type="SUPFAM" id="SSF54980">
    <property type="entry name" value="EF-G C-terminal domain-like"/>
    <property type="match status" value="2"/>
</dbReference>
<dbReference type="SUPFAM" id="SSF52540">
    <property type="entry name" value="P-loop containing nucleoside triphosphate hydrolases"/>
    <property type="match status" value="1"/>
</dbReference>
<dbReference type="SUPFAM" id="SSF54211">
    <property type="entry name" value="Ribosomal protein S5 domain 2-like"/>
    <property type="match status" value="1"/>
</dbReference>
<dbReference type="SUPFAM" id="SSF50447">
    <property type="entry name" value="Translation proteins"/>
    <property type="match status" value="1"/>
</dbReference>
<dbReference type="PROSITE" id="PS00301">
    <property type="entry name" value="G_TR_1"/>
    <property type="match status" value="1"/>
</dbReference>
<dbReference type="PROSITE" id="PS51722">
    <property type="entry name" value="G_TR_2"/>
    <property type="match status" value="1"/>
</dbReference>
<evidence type="ECO:0000250" key="1"/>
<evidence type="ECO:0000305" key="2"/>
<gene>
    <name type="primary">fusA</name>
    <name type="synonym">far</name>
    <name type="synonym">fus</name>
    <name type="ordered locus">c4112</name>
</gene>
<reference key="1">
    <citation type="journal article" date="2002" name="Proc. Natl. Acad. Sci. U.S.A.">
        <title>Extensive mosaic structure revealed by the complete genome sequence of uropathogenic Escherichia coli.</title>
        <authorList>
            <person name="Welch R.A."/>
            <person name="Burland V."/>
            <person name="Plunkett G. III"/>
            <person name="Redford P."/>
            <person name="Roesch P."/>
            <person name="Rasko D."/>
            <person name="Buckles E.L."/>
            <person name="Liou S.-R."/>
            <person name="Boutin A."/>
            <person name="Hackett J."/>
            <person name="Stroud D."/>
            <person name="Mayhew G.F."/>
            <person name="Rose D.J."/>
            <person name="Zhou S."/>
            <person name="Schwartz D.C."/>
            <person name="Perna N.T."/>
            <person name="Mobley H.L.T."/>
            <person name="Donnenberg M.S."/>
            <person name="Blattner F.R."/>
        </authorList>
    </citation>
    <scope>NUCLEOTIDE SEQUENCE [LARGE SCALE GENOMIC DNA]</scope>
    <source>
        <strain>CFT073 / ATCC 700928 / UPEC</strain>
    </source>
</reference>
<feature type="initiator methionine" description="Removed" evidence="1">
    <location>
        <position position="1"/>
    </location>
</feature>
<feature type="chain" id="PRO_0000091120" description="Elongation factor G">
    <location>
        <begin position="2"/>
        <end position="704"/>
    </location>
</feature>
<feature type="domain" description="tr-type G">
    <location>
        <begin position="8"/>
        <end position="290"/>
    </location>
</feature>
<feature type="binding site" evidence="1">
    <location>
        <begin position="17"/>
        <end position="24"/>
    </location>
    <ligand>
        <name>GTP</name>
        <dbReference type="ChEBI" id="CHEBI:37565"/>
    </ligand>
</feature>
<feature type="binding site" evidence="1">
    <location>
        <begin position="88"/>
        <end position="92"/>
    </location>
    <ligand>
        <name>GTP</name>
        <dbReference type="ChEBI" id="CHEBI:37565"/>
    </ligand>
</feature>
<feature type="binding site" evidence="1">
    <location>
        <begin position="142"/>
        <end position="145"/>
    </location>
    <ligand>
        <name>GTP</name>
        <dbReference type="ChEBI" id="CHEBI:37565"/>
    </ligand>
</feature>
<feature type="modified residue" description="N6-acetyllysine" evidence="1">
    <location>
        <position position="504"/>
    </location>
</feature>
<feature type="modified residue" description="N6-acetyllysine" evidence="1">
    <location>
        <position position="643"/>
    </location>
</feature>
<organism>
    <name type="scientific">Escherichia coli O6:H1 (strain CFT073 / ATCC 700928 / UPEC)</name>
    <dbReference type="NCBI Taxonomy" id="199310"/>
    <lineage>
        <taxon>Bacteria</taxon>
        <taxon>Pseudomonadati</taxon>
        <taxon>Pseudomonadota</taxon>
        <taxon>Gammaproteobacteria</taxon>
        <taxon>Enterobacterales</taxon>
        <taxon>Enterobacteriaceae</taxon>
        <taxon>Escherichia</taxon>
    </lineage>
</organism>
<name>EFG_ECOL6</name>
<proteinExistence type="inferred from homology"/>
<comment type="function">
    <text evidence="1">Catalyzes the GTP-dependent ribosomal translocation step during translation elongation. During this step, the ribosome changes from the pre-translocational (PRE) to the post-translocational (POST) state as the newly formed A-site-bound peptidyl-tRNA and P-site-bound deacylated tRNA move to the P and E sites, respectively. Catalyzes the coordinated movement of the two tRNA molecules, the mRNA and conformational changes in the ribosome (By similarity).</text>
</comment>
<comment type="subcellular location">
    <subcellularLocation>
        <location evidence="1">Cytoplasm</location>
    </subcellularLocation>
</comment>
<comment type="similarity">
    <text evidence="2">Belongs to the TRAFAC class translation factor GTPase superfamily. Classic translation factor GTPase family. EF-G/EF-2 subfamily.</text>
</comment>
<sequence length="704" mass="77581">MARTTPIARYRNIGISAHIDAGKTTTTERILFYTGVNHKIGEVHDGAATMDWMEQEQERGITITSAATTAFWSGMAKQYEPHRINIIDTPGHVDFTIEVERSMRVLDGAVMVYCAVGGVQPQSETVWRQANKYKVPRIAFVNKMDRMGANFLKVVNQIKTRLGANPVPLQLAIGAEEHFTGVVDLVKMKAINWNDADQGVTFEYEDIPADMVELANEWHQNLIESAAEASEELMEKYLGGEELTEAEIKGALRQRVLNNEIILVTCGSAFKNKGVQAMLDAVIDYLPSPVDVPAINGILDDGKDTPAERHASDDEPFSALAFKIATDPFVGNLTFFRVYSGVVNSGDTVLNSVKAARERFGRIVQMHANKREEIKEVRAGDIAAAIGLKDVTTGDTLCDPDAPIILERMEFPEPVISIAVEPKTKADQEKMGLALGRLAKEDPSFRVWTDEESNQTIIAGMGELHLDIIVDRMKREFNVEANVGKPQVAYRETIRQKVTDVEGKHAKQSGGRGQYGHVVIDMYPLEPGSNPKGYEFINDIKGGVIPGEYIPAVDKGIQEQLKAGPLAGYPVVDMGIRLHFGSYHDVDSSELAFKLAASIAFKEGFKKAKPVLLEPIMKVEVETPEENTGDVIGDLSRRRGMLKGQESEVTGVKIHAEVPLSEMFGYATQLRSLTKGRASYTMEFLKYDEAPSNVAQAVIEARGK</sequence>
<protein>
    <recommendedName>
        <fullName>Elongation factor G</fullName>
        <shortName>EF-G</shortName>
    </recommendedName>
</protein>
<accession>P0A6M9</accession>
<accession>P02996</accession>
<accession>Q9F439</accession>